<reference key="1">
    <citation type="journal article" date="1993" name="Nucleic Acids Res.">
        <title>Analysis of the Escherichia coli genome. IV. DNA sequence of the region from 89.2 to 92.8 minutes.</title>
        <authorList>
            <person name="Blattner F.R."/>
            <person name="Burland V.D."/>
            <person name="Plunkett G. III"/>
            <person name="Sofia H.J."/>
            <person name="Daniels D.L."/>
        </authorList>
    </citation>
    <scope>NUCLEOTIDE SEQUENCE [LARGE SCALE GENOMIC DNA]</scope>
    <source>
        <strain>K12 / MG1655 / ATCC 47076</strain>
    </source>
</reference>
<reference key="2">
    <citation type="journal article" date="1997" name="Science">
        <title>The complete genome sequence of Escherichia coli K-12.</title>
        <authorList>
            <person name="Blattner F.R."/>
            <person name="Plunkett G. III"/>
            <person name="Bloch C.A."/>
            <person name="Perna N.T."/>
            <person name="Burland V."/>
            <person name="Riley M."/>
            <person name="Collado-Vides J."/>
            <person name="Glasner J.D."/>
            <person name="Rode C.K."/>
            <person name="Mayhew G.F."/>
            <person name="Gregor J."/>
            <person name="Davis N.W."/>
            <person name="Kirkpatrick H.A."/>
            <person name="Goeden M.A."/>
            <person name="Rose D.J."/>
            <person name="Mau B."/>
            <person name="Shao Y."/>
        </authorList>
    </citation>
    <scope>NUCLEOTIDE SEQUENCE [LARGE SCALE GENOMIC DNA]</scope>
    <source>
        <strain>K12 / MG1655 / ATCC 47076</strain>
    </source>
</reference>
<reference key="3">
    <citation type="journal article" date="2006" name="Mol. Syst. Biol.">
        <title>Highly accurate genome sequences of Escherichia coli K-12 strains MG1655 and W3110.</title>
        <authorList>
            <person name="Hayashi K."/>
            <person name="Morooka N."/>
            <person name="Yamamoto Y."/>
            <person name="Fujita K."/>
            <person name="Isono K."/>
            <person name="Choi S."/>
            <person name="Ohtsubo E."/>
            <person name="Baba T."/>
            <person name="Wanner B.L."/>
            <person name="Mori H."/>
            <person name="Horiuchi T."/>
        </authorList>
    </citation>
    <scope>NUCLEOTIDE SEQUENCE [LARGE SCALE GENOMIC DNA]</scope>
    <source>
        <strain>K12 / W3110 / ATCC 27325 / DSM 5911</strain>
    </source>
</reference>
<reference key="4">
    <citation type="journal article" date="1998" name="Mol. Microbiol.">
        <title>The ZnuABC high-affinity zinc uptake system and its regulator Zur in Escherichia coli.</title>
        <authorList>
            <person name="Patzer S.I."/>
            <person name="Hantke K."/>
        </authorList>
    </citation>
    <scope>CHARACTERIZATION</scope>
</reference>
<evidence type="ECO:0000305" key="1"/>
<evidence type="ECO:0007829" key="2">
    <source>
        <dbReference type="PDB" id="4MTD"/>
    </source>
</evidence>
<feature type="chain" id="PRO_0000095592" description="Zinc uptake regulation protein">
    <location>
        <begin position="1"/>
        <end position="171"/>
    </location>
</feature>
<feature type="helix" evidence="2">
    <location>
        <begin position="5"/>
        <end position="19"/>
    </location>
</feature>
<feature type="helix" evidence="2">
    <location>
        <begin position="26"/>
        <end position="37"/>
    </location>
</feature>
<feature type="strand" evidence="2">
    <location>
        <begin position="38"/>
        <end position="40"/>
    </location>
</feature>
<feature type="helix" evidence="2">
    <location>
        <begin position="44"/>
        <end position="54"/>
    </location>
</feature>
<feature type="helix" evidence="2">
    <location>
        <begin position="60"/>
        <end position="72"/>
    </location>
</feature>
<feature type="strand" evidence="2">
    <location>
        <begin position="75"/>
        <end position="79"/>
    </location>
</feature>
<feature type="turn" evidence="2">
    <location>
        <begin position="80"/>
        <end position="83"/>
    </location>
</feature>
<feature type="strand" evidence="2">
    <location>
        <begin position="84"/>
        <end position="87"/>
    </location>
</feature>
<feature type="strand" evidence="2">
    <location>
        <begin position="99"/>
        <end position="103"/>
    </location>
</feature>
<feature type="turn" evidence="2">
    <location>
        <begin position="104"/>
        <end position="106"/>
    </location>
</feature>
<feature type="strand" evidence="2">
    <location>
        <begin position="109"/>
        <end position="112"/>
    </location>
</feature>
<feature type="helix" evidence="2">
    <location>
        <begin position="115"/>
        <end position="127"/>
    </location>
</feature>
<feature type="strand" evidence="2">
    <location>
        <begin position="131"/>
        <end position="142"/>
    </location>
</feature>
<feature type="helix" evidence="2">
    <location>
        <begin position="144"/>
        <end position="151"/>
    </location>
</feature>
<accession>P0AC51</accession>
<accession>P32692</accession>
<accession>P76784</accession>
<accession>Q2M6Q8</accession>
<sequence>MEKTTTQELLAQAEKICAQRNVRLTPQRLEVLRLMSLQDGAISAYDLLDLLREAEPQAKPPTVYRALDFLLEQGFVHKVESTNSYVLCHLFDQPTHTSAMFICDRCGAVKEECAEGVEDIMHTLAAKMGFALRHNVIEAHGLCAACVEVEACRHPEQCQHDHSVQVKKKPR</sequence>
<name>ZUR_ECOLI</name>
<protein>
    <recommendedName>
        <fullName>Zinc uptake regulation protein</fullName>
        <shortName>Zinc uptake regulator</shortName>
    </recommendedName>
</protein>
<dbReference type="EMBL" id="U00006">
    <property type="protein sequence ID" value="AAC43140.1"/>
    <property type="status" value="ALT_INIT"/>
    <property type="molecule type" value="Genomic_DNA"/>
</dbReference>
<dbReference type="EMBL" id="U00096">
    <property type="protein sequence ID" value="AAC77016.2"/>
    <property type="molecule type" value="Genomic_DNA"/>
</dbReference>
<dbReference type="EMBL" id="AP009048">
    <property type="protein sequence ID" value="BAE78048.1"/>
    <property type="molecule type" value="Genomic_DNA"/>
</dbReference>
<dbReference type="PIR" id="E65212">
    <property type="entry name" value="E65212"/>
</dbReference>
<dbReference type="RefSeq" id="NP_418470.4">
    <property type="nucleotide sequence ID" value="NC_000913.3"/>
</dbReference>
<dbReference type="RefSeq" id="WP_001295691.1">
    <property type="nucleotide sequence ID" value="NZ_STEB01000022.1"/>
</dbReference>
<dbReference type="PDB" id="4MTD">
    <property type="method" value="X-ray"/>
    <property type="resolution" value="2.50 A"/>
    <property type="chains" value="A/B/C/D=1-171"/>
</dbReference>
<dbReference type="PDB" id="4MTE">
    <property type="method" value="X-ray"/>
    <property type="resolution" value="2.50 A"/>
    <property type="chains" value="A/B/C/D=1-171"/>
</dbReference>
<dbReference type="PDBsum" id="4MTD"/>
<dbReference type="PDBsum" id="4MTE"/>
<dbReference type="SMR" id="P0AC51"/>
<dbReference type="BioGRID" id="4261723">
    <property type="interactions" value="90"/>
</dbReference>
<dbReference type="DIP" id="DIP-12953N"/>
<dbReference type="FunCoup" id="P0AC51">
    <property type="interactions" value="193"/>
</dbReference>
<dbReference type="STRING" id="511145.b4046"/>
<dbReference type="jPOST" id="P0AC51"/>
<dbReference type="PaxDb" id="511145-b4046"/>
<dbReference type="EnsemblBacteria" id="AAC77016">
    <property type="protein sequence ID" value="AAC77016"/>
    <property type="gene ID" value="b4046"/>
</dbReference>
<dbReference type="GeneID" id="93777785"/>
<dbReference type="GeneID" id="948552"/>
<dbReference type="KEGG" id="ecj:JW5714"/>
<dbReference type="KEGG" id="eco:b4046"/>
<dbReference type="KEGG" id="ecoc:C3026_21865"/>
<dbReference type="PATRIC" id="fig|511145.12.peg.4163"/>
<dbReference type="EchoBASE" id="EB1873"/>
<dbReference type="eggNOG" id="COG0735">
    <property type="taxonomic scope" value="Bacteria"/>
</dbReference>
<dbReference type="HOGENOM" id="CLU_096072_2_1_6"/>
<dbReference type="InParanoid" id="P0AC51"/>
<dbReference type="OMA" id="SHTSAMF"/>
<dbReference type="OrthoDB" id="9801127at2"/>
<dbReference type="PhylomeDB" id="P0AC51"/>
<dbReference type="BioCyc" id="EcoCyc:EG11929-MONOMER"/>
<dbReference type="EvolutionaryTrace" id="P0AC51"/>
<dbReference type="PHI-base" id="PHI:8072"/>
<dbReference type="PRO" id="PR:P0AC51"/>
<dbReference type="Proteomes" id="UP000000625">
    <property type="component" value="Chromosome"/>
</dbReference>
<dbReference type="GO" id="GO:0005829">
    <property type="term" value="C:cytosol"/>
    <property type="evidence" value="ECO:0000318"/>
    <property type="project" value="GO_Central"/>
</dbReference>
<dbReference type="GO" id="GO:0032993">
    <property type="term" value="C:protein-DNA complex"/>
    <property type="evidence" value="ECO:0000353"/>
    <property type="project" value="CollecTF"/>
</dbReference>
<dbReference type="GO" id="GO:0003700">
    <property type="term" value="F:DNA-binding transcription factor activity"/>
    <property type="evidence" value="ECO:0000318"/>
    <property type="project" value="GO_Central"/>
</dbReference>
<dbReference type="GO" id="GO:0001217">
    <property type="term" value="F:DNA-binding transcription repressor activity"/>
    <property type="evidence" value="ECO:0000353"/>
    <property type="project" value="CollecTF"/>
</dbReference>
<dbReference type="GO" id="GO:0042802">
    <property type="term" value="F:identical protein binding"/>
    <property type="evidence" value="ECO:0000353"/>
    <property type="project" value="IntAct"/>
</dbReference>
<dbReference type="GO" id="GO:0000976">
    <property type="term" value="F:transcription cis-regulatory region binding"/>
    <property type="evidence" value="ECO:0000353"/>
    <property type="project" value="CollecTF"/>
</dbReference>
<dbReference type="GO" id="GO:0008270">
    <property type="term" value="F:zinc ion binding"/>
    <property type="evidence" value="ECO:0000318"/>
    <property type="project" value="GO_Central"/>
</dbReference>
<dbReference type="GO" id="GO:0006351">
    <property type="term" value="P:DNA-templated transcription"/>
    <property type="evidence" value="ECO:0000314"/>
    <property type="project" value="EcoCyc"/>
</dbReference>
<dbReference type="GO" id="GO:0045892">
    <property type="term" value="P:negative regulation of DNA-templated transcription"/>
    <property type="evidence" value="ECO:0000318"/>
    <property type="project" value="GO_Central"/>
</dbReference>
<dbReference type="GO" id="GO:1900376">
    <property type="term" value="P:regulation of secondary metabolite biosynthetic process"/>
    <property type="evidence" value="ECO:0000318"/>
    <property type="project" value="GO_Central"/>
</dbReference>
<dbReference type="CDD" id="cd07153">
    <property type="entry name" value="Fur_like"/>
    <property type="match status" value="1"/>
</dbReference>
<dbReference type="FunFam" id="1.10.10.10:FF:000137">
    <property type="entry name" value="Zinc uptake transcriptional repressor"/>
    <property type="match status" value="1"/>
</dbReference>
<dbReference type="FunFam" id="3.30.1490.190:FF:000002">
    <property type="entry name" value="Zinc uptake transcriptional repressor"/>
    <property type="match status" value="1"/>
</dbReference>
<dbReference type="Gene3D" id="3.30.1490.190">
    <property type="match status" value="1"/>
</dbReference>
<dbReference type="Gene3D" id="1.10.10.10">
    <property type="entry name" value="Winged helix-like DNA-binding domain superfamily/Winged helix DNA-binding domain"/>
    <property type="match status" value="1"/>
</dbReference>
<dbReference type="InterPro" id="IPR002481">
    <property type="entry name" value="FUR"/>
</dbReference>
<dbReference type="InterPro" id="IPR043135">
    <property type="entry name" value="Fur_C"/>
</dbReference>
<dbReference type="InterPro" id="IPR036388">
    <property type="entry name" value="WH-like_DNA-bd_sf"/>
</dbReference>
<dbReference type="InterPro" id="IPR036390">
    <property type="entry name" value="WH_DNA-bd_sf"/>
</dbReference>
<dbReference type="NCBIfam" id="NF008646">
    <property type="entry name" value="PRK11639.1"/>
    <property type="match status" value="1"/>
</dbReference>
<dbReference type="PANTHER" id="PTHR33202">
    <property type="entry name" value="ZINC UPTAKE REGULATION PROTEIN"/>
    <property type="match status" value="1"/>
</dbReference>
<dbReference type="PANTHER" id="PTHR33202:SF6">
    <property type="entry name" value="ZINC UPTAKE REGULATION PROTEIN"/>
    <property type="match status" value="1"/>
</dbReference>
<dbReference type="Pfam" id="PF01475">
    <property type="entry name" value="FUR"/>
    <property type="match status" value="1"/>
</dbReference>
<dbReference type="SUPFAM" id="SSF46785">
    <property type="entry name" value="Winged helix' DNA-binding domain"/>
    <property type="match status" value="1"/>
</dbReference>
<organism>
    <name type="scientific">Escherichia coli (strain K12)</name>
    <dbReference type="NCBI Taxonomy" id="83333"/>
    <lineage>
        <taxon>Bacteria</taxon>
        <taxon>Pseudomonadati</taxon>
        <taxon>Pseudomonadota</taxon>
        <taxon>Gammaproteobacteria</taxon>
        <taxon>Enterobacterales</taxon>
        <taxon>Enterobacteriaceae</taxon>
        <taxon>Escherichia</taxon>
    </lineage>
</organism>
<gene>
    <name type="primary">zur</name>
    <name type="synonym">yjbK</name>
    <name type="ordered locus">b4046</name>
    <name type="ordered locus">JW5714</name>
</gene>
<comment type="function">
    <text>Acts as a negative controlling element, employing Zn(2+) as a cofactor to bind the operator of the repressed genes (znuACB).</text>
</comment>
<comment type="interaction">
    <interactant intactId="EBI-16126292">
        <id>P0AC51</id>
    </interactant>
    <interactant intactId="EBI-16126292">
        <id>P0AC51</id>
        <label>zur</label>
    </interactant>
    <organismsDiffer>false</organismsDiffer>
    <experiments>2</experiments>
</comment>
<comment type="similarity">
    <text evidence="1">Belongs to the Fur family.</text>
</comment>
<comment type="sequence caution" evidence="1">
    <conflict type="erroneous initiation">
        <sequence resource="EMBL-CDS" id="AAC43140"/>
    </conflict>
    <text>Extended N-terminus.</text>
</comment>
<proteinExistence type="evidence at protein level"/>
<keyword id="KW-0002">3D-structure</keyword>
<keyword id="KW-0238">DNA-binding</keyword>
<keyword id="KW-1185">Reference proteome</keyword>
<keyword id="KW-0678">Repressor</keyword>
<keyword id="KW-0804">Transcription</keyword>
<keyword id="KW-0805">Transcription regulation</keyword>
<keyword id="KW-0862">Zinc</keyword>